<sequence>MSQSTATYINVIGAGLAGSEAAYQIAKRGIPVKLYEMRGVKATPQHKTTNFAELVCSNSFRGDSLTNAVGLLKEEMRRLDSIIMRNGEANRVPAGGAMAVDREGYAKSVTAELENHPLIEVIRDEITEIPNDAITVIATGPLTSDALAEKIHAVNGGDGFYFYDAAAPIIDKSTIDMSKVYLKSRYDKGEAAYLNCPMTKEEFMAFHEALTTAEEAPLNSFEKEKYFEGCMPIEVMAKRGIKTMLYGPMKPVGLEYPDDYTGPRDGEFKTPYAVVQLRQDNAAGSLYNIVGFQTHLKWGEQKRVFQMIPGLENAEFVRYGVMHRNSYMDSPNLLTETFQSRSNPNLLFAGQMTGVEGYVESAASGLVAGINAARLFKREEALIFPQTTAIGSLPHYVTHADSKHFQPMNVNFGIIKELEGPRIRDKKERYEAIASRALADLDTCLASL</sequence>
<proteinExistence type="inferred from homology"/>
<comment type="function">
    <text evidence="1">Catalyzes the folate-dependent formation of 5-methyl-uridine at position 54 (M-5-U54) in all tRNAs.</text>
</comment>
<comment type="catalytic activity">
    <reaction evidence="1">
        <text>uridine(54) in tRNA + (6R)-5,10-methylene-5,6,7,8-tetrahydrofolate + NADH + H(+) = 5-methyluridine(54) in tRNA + (6S)-5,6,7,8-tetrahydrofolate + NAD(+)</text>
        <dbReference type="Rhea" id="RHEA:16873"/>
        <dbReference type="Rhea" id="RHEA-COMP:10167"/>
        <dbReference type="Rhea" id="RHEA-COMP:10193"/>
        <dbReference type="ChEBI" id="CHEBI:15378"/>
        <dbReference type="ChEBI" id="CHEBI:15636"/>
        <dbReference type="ChEBI" id="CHEBI:57453"/>
        <dbReference type="ChEBI" id="CHEBI:57540"/>
        <dbReference type="ChEBI" id="CHEBI:57945"/>
        <dbReference type="ChEBI" id="CHEBI:65315"/>
        <dbReference type="ChEBI" id="CHEBI:74447"/>
        <dbReference type="EC" id="2.1.1.74"/>
    </reaction>
</comment>
<comment type="catalytic activity">
    <reaction evidence="1">
        <text>uridine(54) in tRNA + (6R)-5,10-methylene-5,6,7,8-tetrahydrofolate + NADPH + H(+) = 5-methyluridine(54) in tRNA + (6S)-5,6,7,8-tetrahydrofolate + NADP(+)</text>
        <dbReference type="Rhea" id="RHEA:62372"/>
        <dbReference type="Rhea" id="RHEA-COMP:10167"/>
        <dbReference type="Rhea" id="RHEA-COMP:10193"/>
        <dbReference type="ChEBI" id="CHEBI:15378"/>
        <dbReference type="ChEBI" id="CHEBI:15636"/>
        <dbReference type="ChEBI" id="CHEBI:57453"/>
        <dbReference type="ChEBI" id="CHEBI:57783"/>
        <dbReference type="ChEBI" id="CHEBI:58349"/>
        <dbReference type="ChEBI" id="CHEBI:65315"/>
        <dbReference type="ChEBI" id="CHEBI:74447"/>
        <dbReference type="EC" id="2.1.1.74"/>
    </reaction>
</comment>
<comment type="cofactor">
    <cofactor evidence="1">
        <name>FAD</name>
        <dbReference type="ChEBI" id="CHEBI:57692"/>
    </cofactor>
</comment>
<comment type="subcellular location">
    <subcellularLocation>
        <location evidence="1">Cytoplasm</location>
    </subcellularLocation>
</comment>
<comment type="similarity">
    <text evidence="1">Belongs to the MnmG family. TrmFO subfamily.</text>
</comment>
<comment type="sequence caution" evidence="2">
    <conflict type="erroneous initiation">
        <sequence resource="EMBL-CDS" id="AAM79428"/>
    </conflict>
</comment>
<reference key="1">
    <citation type="journal article" date="2002" name="Proc. Natl. Acad. Sci. U.S.A.">
        <title>Genome sequence of a serotype M3 strain of group A Streptococcus: phage-encoded toxins, the high-virulence phenotype, and clone emergence.</title>
        <authorList>
            <person name="Beres S.B."/>
            <person name="Sylva G.L."/>
            <person name="Barbian K.D."/>
            <person name="Lei B."/>
            <person name="Hoff J.S."/>
            <person name="Mammarella N.D."/>
            <person name="Liu M.-Y."/>
            <person name="Smoot J.C."/>
            <person name="Porcella S.F."/>
            <person name="Parkins L.D."/>
            <person name="Campbell D.S."/>
            <person name="Smith T.M."/>
            <person name="McCormick J.K."/>
            <person name="Leung D.Y.M."/>
            <person name="Schlievert P.M."/>
            <person name="Musser J.M."/>
        </authorList>
    </citation>
    <scope>NUCLEOTIDE SEQUENCE [LARGE SCALE GENOMIC DNA]</scope>
    <source>
        <strain>ATCC BAA-595 / MGAS315</strain>
    </source>
</reference>
<evidence type="ECO:0000255" key="1">
    <source>
        <dbReference type="HAMAP-Rule" id="MF_01037"/>
    </source>
</evidence>
<evidence type="ECO:0000305" key="2"/>
<name>TRMFO_STRP3</name>
<feature type="chain" id="PRO_0000117276" description="Methylenetetrahydrofolate--tRNA-(uracil-5-)-methyltransferase TrmFO">
    <location>
        <begin position="1"/>
        <end position="448"/>
    </location>
</feature>
<feature type="binding site" evidence="1">
    <location>
        <begin position="13"/>
        <end position="18"/>
    </location>
    <ligand>
        <name>FAD</name>
        <dbReference type="ChEBI" id="CHEBI:57692"/>
    </ligand>
</feature>
<dbReference type="EC" id="2.1.1.74" evidence="1"/>
<dbReference type="EMBL" id="AE014074">
    <property type="protein sequence ID" value="AAM79428.1"/>
    <property type="status" value="ALT_INIT"/>
    <property type="molecule type" value="Genomic_DNA"/>
</dbReference>
<dbReference type="RefSeq" id="WP_032461335.1">
    <property type="nucleotide sequence ID" value="NC_004070.1"/>
</dbReference>
<dbReference type="SMR" id="P0DB36"/>
<dbReference type="KEGG" id="spg:SpyM3_0821"/>
<dbReference type="HOGENOM" id="CLU_033057_1_0_9"/>
<dbReference type="Proteomes" id="UP000000564">
    <property type="component" value="Chromosome"/>
</dbReference>
<dbReference type="GO" id="GO:0005829">
    <property type="term" value="C:cytosol"/>
    <property type="evidence" value="ECO:0007669"/>
    <property type="project" value="TreeGrafter"/>
</dbReference>
<dbReference type="GO" id="GO:0050660">
    <property type="term" value="F:flavin adenine dinucleotide binding"/>
    <property type="evidence" value="ECO:0007669"/>
    <property type="project" value="UniProtKB-UniRule"/>
</dbReference>
<dbReference type="GO" id="GO:0047151">
    <property type="term" value="F:tRNA (uracil(54)-C5)-methyltransferase activity, 5,10-methylenetetrahydrofolate-dependent"/>
    <property type="evidence" value="ECO:0007669"/>
    <property type="project" value="UniProtKB-UniRule"/>
</dbReference>
<dbReference type="GO" id="GO:0030488">
    <property type="term" value="P:tRNA methylation"/>
    <property type="evidence" value="ECO:0007669"/>
    <property type="project" value="TreeGrafter"/>
</dbReference>
<dbReference type="GO" id="GO:0002098">
    <property type="term" value="P:tRNA wobble uridine modification"/>
    <property type="evidence" value="ECO:0007669"/>
    <property type="project" value="TreeGrafter"/>
</dbReference>
<dbReference type="FunFam" id="3.50.50.60:FF:000035">
    <property type="entry name" value="Methylenetetrahydrofolate--tRNA-(uracil-5-)-methyltransferase TrmFO"/>
    <property type="match status" value="1"/>
</dbReference>
<dbReference type="FunFam" id="3.50.50.60:FF:000040">
    <property type="entry name" value="Methylenetetrahydrofolate--tRNA-(uracil-5-)-methyltransferase TrmFO"/>
    <property type="match status" value="1"/>
</dbReference>
<dbReference type="Gene3D" id="3.50.50.60">
    <property type="entry name" value="FAD/NAD(P)-binding domain"/>
    <property type="match status" value="2"/>
</dbReference>
<dbReference type="HAMAP" id="MF_01037">
    <property type="entry name" value="TrmFO"/>
    <property type="match status" value="1"/>
</dbReference>
<dbReference type="InterPro" id="IPR036188">
    <property type="entry name" value="FAD/NAD-bd_sf"/>
</dbReference>
<dbReference type="InterPro" id="IPR002218">
    <property type="entry name" value="MnmG-rel"/>
</dbReference>
<dbReference type="InterPro" id="IPR020595">
    <property type="entry name" value="MnmG-rel_CS"/>
</dbReference>
<dbReference type="InterPro" id="IPR040131">
    <property type="entry name" value="MnmG_N"/>
</dbReference>
<dbReference type="InterPro" id="IPR004417">
    <property type="entry name" value="TrmFO"/>
</dbReference>
<dbReference type="NCBIfam" id="TIGR00137">
    <property type="entry name" value="gid_trmFO"/>
    <property type="match status" value="1"/>
</dbReference>
<dbReference type="NCBIfam" id="NF003739">
    <property type="entry name" value="PRK05335.1"/>
    <property type="match status" value="1"/>
</dbReference>
<dbReference type="PANTHER" id="PTHR11806">
    <property type="entry name" value="GLUCOSE INHIBITED DIVISION PROTEIN A"/>
    <property type="match status" value="1"/>
</dbReference>
<dbReference type="PANTHER" id="PTHR11806:SF2">
    <property type="entry name" value="METHYLENETETRAHYDROFOLATE--TRNA-(URACIL-5-)-METHYLTRANSFERASE TRMFO"/>
    <property type="match status" value="1"/>
</dbReference>
<dbReference type="Pfam" id="PF01134">
    <property type="entry name" value="GIDA"/>
    <property type="match status" value="1"/>
</dbReference>
<dbReference type="SUPFAM" id="SSF51905">
    <property type="entry name" value="FAD/NAD(P)-binding domain"/>
    <property type="match status" value="1"/>
</dbReference>
<dbReference type="PROSITE" id="PS01281">
    <property type="entry name" value="GIDA_2"/>
    <property type="match status" value="1"/>
</dbReference>
<protein>
    <recommendedName>
        <fullName evidence="1">Methylenetetrahydrofolate--tRNA-(uracil-5-)-methyltransferase TrmFO</fullName>
        <ecNumber evidence="1">2.1.1.74</ecNumber>
    </recommendedName>
    <alternativeName>
        <fullName evidence="1">Folate-dependent tRNA (uracil-5-)-methyltransferase</fullName>
    </alternativeName>
    <alternativeName>
        <fullName evidence="1">Folate-dependent tRNA(M-5-U54)-methyltransferase</fullName>
    </alternativeName>
</protein>
<accession>P0DB36</accession>
<accession>Q8K7G4</accession>
<gene>
    <name evidence="1" type="primary">trmFO</name>
    <name type="synonym">gid</name>
    <name type="ordered locus">SpyM3_0821</name>
</gene>
<keyword id="KW-0963">Cytoplasm</keyword>
<keyword id="KW-0274">FAD</keyword>
<keyword id="KW-0285">Flavoprotein</keyword>
<keyword id="KW-0489">Methyltransferase</keyword>
<keyword id="KW-0520">NAD</keyword>
<keyword id="KW-0521">NADP</keyword>
<keyword id="KW-0808">Transferase</keyword>
<keyword id="KW-0819">tRNA processing</keyword>
<organism>
    <name type="scientific">Streptococcus pyogenes serotype M3 (strain ATCC BAA-595 / MGAS315)</name>
    <dbReference type="NCBI Taxonomy" id="198466"/>
    <lineage>
        <taxon>Bacteria</taxon>
        <taxon>Bacillati</taxon>
        <taxon>Bacillota</taxon>
        <taxon>Bacilli</taxon>
        <taxon>Lactobacillales</taxon>
        <taxon>Streptococcaceae</taxon>
        <taxon>Streptococcus</taxon>
    </lineage>
</organism>